<proteinExistence type="inferred from homology"/>
<accession>Q6GGK1</accession>
<protein>
    <recommendedName>
        <fullName evidence="1">Tyrosine recombinase XerD</fullName>
    </recommendedName>
</protein>
<gene>
    <name evidence="1" type="primary">xerD</name>
    <name type="ordered locus">SAR1573</name>
</gene>
<keyword id="KW-0131">Cell cycle</keyword>
<keyword id="KW-0132">Cell division</keyword>
<keyword id="KW-0159">Chromosome partition</keyword>
<keyword id="KW-0963">Cytoplasm</keyword>
<keyword id="KW-0229">DNA integration</keyword>
<keyword id="KW-0233">DNA recombination</keyword>
<keyword id="KW-0238">DNA-binding</keyword>
<sequence length="295" mass="34133">METIIEEYLRFIQIEKGLSSNTIGAYRRDLKKYQDYMTEHHISHIDFIDRQLIQECLGHLIDQGQSAKSIARFISTIRSFHQFAIREKYAAKDPTVLLDSPKYDKKLPDVLNVDEVLALLETPDLNKINGYRDRTMLELLYATGMRVSELIHLELENVNLIMGFVRVFGKGDKERIVPLGDAVIEYLTTYIETIRPQLLKKTVTEVLFLNMHGKPLSRQAIWKMIKQNGVKANIKKTLTPHTLRHSFATHLLENGADLRAVQEMLGHSDISTTQLYTHVSKSQIRKMYNQFHPRA</sequence>
<reference key="1">
    <citation type="journal article" date="2004" name="Proc. Natl. Acad. Sci. U.S.A.">
        <title>Complete genomes of two clinical Staphylococcus aureus strains: evidence for the rapid evolution of virulence and drug resistance.</title>
        <authorList>
            <person name="Holden M.T.G."/>
            <person name="Feil E.J."/>
            <person name="Lindsay J.A."/>
            <person name="Peacock S.J."/>
            <person name="Day N.P.J."/>
            <person name="Enright M.C."/>
            <person name="Foster T.J."/>
            <person name="Moore C.E."/>
            <person name="Hurst L."/>
            <person name="Atkin R."/>
            <person name="Barron A."/>
            <person name="Bason N."/>
            <person name="Bentley S.D."/>
            <person name="Chillingworth C."/>
            <person name="Chillingworth T."/>
            <person name="Churcher C."/>
            <person name="Clark L."/>
            <person name="Corton C."/>
            <person name="Cronin A."/>
            <person name="Doggett J."/>
            <person name="Dowd L."/>
            <person name="Feltwell T."/>
            <person name="Hance Z."/>
            <person name="Harris B."/>
            <person name="Hauser H."/>
            <person name="Holroyd S."/>
            <person name="Jagels K."/>
            <person name="James K.D."/>
            <person name="Lennard N."/>
            <person name="Line A."/>
            <person name="Mayes R."/>
            <person name="Moule S."/>
            <person name="Mungall K."/>
            <person name="Ormond D."/>
            <person name="Quail M.A."/>
            <person name="Rabbinowitsch E."/>
            <person name="Rutherford K.M."/>
            <person name="Sanders M."/>
            <person name="Sharp S."/>
            <person name="Simmonds M."/>
            <person name="Stevens K."/>
            <person name="Whitehead S."/>
            <person name="Barrell B.G."/>
            <person name="Spratt B.G."/>
            <person name="Parkhill J."/>
        </authorList>
    </citation>
    <scope>NUCLEOTIDE SEQUENCE [LARGE SCALE GENOMIC DNA]</scope>
    <source>
        <strain>MRSA252</strain>
    </source>
</reference>
<name>XERD_STAAR</name>
<dbReference type="EMBL" id="BX571856">
    <property type="protein sequence ID" value="CAG40569.1"/>
    <property type="molecule type" value="Genomic_DNA"/>
</dbReference>
<dbReference type="RefSeq" id="WP_000447733.1">
    <property type="nucleotide sequence ID" value="NC_002952.2"/>
</dbReference>
<dbReference type="SMR" id="Q6GGK1"/>
<dbReference type="KEGG" id="sar:SAR1573"/>
<dbReference type="HOGENOM" id="CLU_027562_9_6_9"/>
<dbReference type="Proteomes" id="UP000000596">
    <property type="component" value="Chromosome"/>
</dbReference>
<dbReference type="GO" id="GO:0005737">
    <property type="term" value="C:cytoplasm"/>
    <property type="evidence" value="ECO:0007669"/>
    <property type="project" value="UniProtKB-SubCell"/>
</dbReference>
<dbReference type="GO" id="GO:0003677">
    <property type="term" value="F:DNA binding"/>
    <property type="evidence" value="ECO:0007669"/>
    <property type="project" value="UniProtKB-KW"/>
</dbReference>
<dbReference type="GO" id="GO:0009037">
    <property type="term" value="F:tyrosine-based site-specific recombinase activity"/>
    <property type="evidence" value="ECO:0007669"/>
    <property type="project" value="UniProtKB-UniRule"/>
</dbReference>
<dbReference type="GO" id="GO:0051301">
    <property type="term" value="P:cell division"/>
    <property type="evidence" value="ECO:0007669"/>
    <property type="project" value="UniProtKB-KW"/>
</dbReference>
<dbReference type="GO" id="GO:0007059">
    <property type="term" value="P:chromosome segregation"/>
    <property type="evidence" value="ECO:0007669"/>
    <property type="project" value="UniProtKB-UniRule"/>
</dbReference>
<dbReference type="GO" id="GO:0006313">
    <property type="term" value="P:DNA transposition"/>
    <property type="evidence" value="ECO:0007669"/>
    <property type="project" value="UniProtKB-UniRule"/>
</dbReference>
<dbReference type="CDD" id="cd00798">
    <property type="entry name" value="INT_XerDC_C"/>
    <property type="match status" value="1"/>
</dbReference>
<dbReference type="Gene3D" id="1.10.150.130">
    <property type="match status" value="1"/>
</dbReference>
<dbReference type="Gene3D" id="1.10.443.10">
    <property type="entry name" value="Intergrase catalytic core"/>
    <property type="match status" value="1"/>
</dbReference>
<dbReference type="HAMAP" id="MF_01808">
    <property type="entry name" value="Recomb_XerC_XerD"/>
    <property type="match status" value="1"/>
</dbReference>
<dbReference type="HAMAP" id="MF_01807">
    <property type="entry name" value="Recomb_XerD"/>
    <property type="match status" value="1"/>
</dbReference>
<dbReference type="InterPro" id="IPR044068">
    <property type="entry name" value="CB"/>
</dbReference>
<dbReference type="InterPro" id="IPR011010">
    <property type="entry name" value="DNA_brk_join_enz"/>
</dbReference>
<dbReference type="InterPro" id="IPR013762">
    <property type="entry name" value="Integrase-like_cat_sf"/>
</dbReference>
<dbReference type="InterPro" id="IPR002104">
    <property type="entry name" value="Integrase_catalytic"/>
</dbReference>
<dbReference type="InterPro" id="IPR010998">
    <property type="entry name" value="Integrase_recombinase_N"/>
</dbReference>
<dbReference type="InterPro" id="IPR004107">
    <property type="entry name" value="Integrase_SAM-like_N"/>
</dbReference>
<dbReference type="InterPro" id="IPR011932">
    <property type="entry name" value="Recomb_XerD"/>
</dbReference>
<dbReference type="InterPro" id="IPR023009">
    <property type="entry name" value="Tyrosine_recombinase_XerC/XerD"/>
</dbReference>
<dbReference type="InterPro" id="IPR050090">
    <property type="entry name" value="Tyrosine_recombinase_XerCD"/>
</dbReference>
<dbReference type="NCBIfam" id="NF001399">
    <property type="entry name" value="PRK00283.1"/>
    <property type="match status" value="1"/>
</dbReference>
<dbReference type="NCBIfam" id="NF040815">
    <property type="entry name" value="recomb_XerA_Arch"/>
    <property type="match status" value="1"/>
</dbReference>
<dbReference type="NCBIfam" id="TIGR02225">
    <property type="entry name" value="recomb_XerD"/>
    <property type="match status" value="1"/>
</dbReference>
<dbReference type="PANTHER" id="PTHR30349">
    <property type="entry name" value="PHAGE INTEGRASE-RELATED"/>
    <property type="match status" value="1"/>
</dbReference>
<dbReference type="PANTHER" id="PTHR30349:SF81">
    <property type="entry name" value="TYROSINE RECOMBINASE XERC"/>
    <property type="match status" value="1"/>
</dbReference>
<dbReference type="Pfam" id="PF02899">
    <property type="entry name" value="Phage_int_SAM_1"/>
    <property type="match status" value="1"/>
</dbReference>
<dbReference type="Pfam" id="PF00589">
    <property type="entry name" value="Phage_integrase"/>
    <property type="match status" value="1"/>
</dbReference>
<dbReference type="SUPFAM" id="SSF56349">
    <property type="entry name" value="DNA breaking-rejoining enzymes"/>
    <property type="match status" value="1"/>
</dbReference>
<dbReference type="PROSITE" id="PS51900">
    <property type="entry name" value="CB"/>
    <property type="match status" value="1"/>
</dbReference>
<dbReference type="PROSITE" id="PS51898">
    <property type="entry name" value="TYR_RECOMBINASE"/>
    <property type="match status" value="1"/>
</dbReference>
<evidence type="ECO:0000255" key="1">
    <source>
        <dbReference type="HAMAP-Rule" id="MF_01807"/>
    </source>
</evidence>
<evidence type="ECO:0000255" key="2">
    <source>
        <dbReference type="PROSITE-ProRule" id="PRU01246"/>
    </source>
</evidence>
<evidence type="ECO:0000255" key="3">
    <source>
        <dbReference type="PROSITE-ProRule" id="PRU01248"/>
    </source>
</evidence>
<feature type="chain" id="PRO_0000095419" description="Tyrosine recombinase XerD">
    <location>
        <begin position="1"/>
        <end position="295"/>
    </location>
</feature>
<feature type="domain" description="Core-binding (CB)" evidence="3">
    <location>
        <begin position="1"/>
        <end position="85"/>
    </location>
</feature>
<feature type="domain" description="Tyr recombinase" evidence="2">
    <location>
        <begin position="106"/>
        <end position="289"/>
    </location>
</feature>
<feature type="active site" evidence="1">
    <location>
        <position position="146"/>
    </location>
</feature>
<feature type="active site" evidence="1">
    <location>
        <position position="170"/>
    </location>
</feature>
<feature type="active site" evidence="1">
    <location>
        <position position="241"/>
    </location>
</feature>
<feature type="active site" evidence="1">
    <location>
        <position position="244"/>
    </location>
</feature>
<feature type="active site" evidence="1">
    <location>
        <position position="267"/>
    </location>
</feature>
<feature type="active site" description="O-(3'-phospho-DNA)-tyrosine intermediate" evidence="1">
    <location>
        <position position="276"/>
    </location>
</feature>
<organism>
    <name type="scientific">Staphylococcus aureus (strain MRSA252)</name>
    <dbReference type="NCBI Taxonomy" id="282458"/>
    <lineage>
        <taxon>Bacteria</taxon>
        <taxon>Bacillati</taxon>
        <taxon>Bacillota</taxon>
        <taxon>Bacilli</taxon>
        <taxon>Bacillales</taxon>
        <taxon>Staphylococcaceae</taxon>
        <taxon>Staphylococcus</taxon>
    </lineage>
</organism>
<comment type="function">
    <text evidence="1">Site-specific tyrosine recombinase, which acts by catalyzing the cutting and rejoining of the recombining DNA molecules. The XerC-XerD complex is essential to convert dimers of the bacterial chromosome into monomers to permit their segregation at cell division. It also contributes to the segregational stability of plasmids.</text>
</comment>
<comment type="subunit">
    <text evidence="1">Forms a cyclic heterotetrameric complex composed of two molecules of XerC and two molecules of XerD.</text>
</comment>
<comment type="subcellular location">
    <subcellularLocation>
        <location evidence="1">Cytoplasm</location>
    </subcellularLocation>
</comment>
<comment type="similarity">
    <text evidence="1">Belongs to the 'phage' integrase family. XerD subfamily.</text>
</comment>